<dbReference type="EMBL" id="CP001138">
    <property type="protein sequence ID" value="ACH49894.1"/>
    <property type="molecule type" value="Genomic_DNA"/>
</dbReference>
<dbReference type="RefSeq" id="WP_000729470.1">
    <property type="nucleotide sequence ID" value="NC_011149.1"/>
</dbReference>
<dbReference type="SMR" id="B5F7C3"/>
<dbReference type="KEGG" id="sea:SeAg_B1797"/>
<dbReference type="HOGENOM" id="CLU_124502_1_1_6"/>
<dbReference type="UniPathway" id="UPA00266"/>
<dbReference type="Proteomes" id="UP000008819">
    <property type="component" value="Chromosome"/>
</dbReference>
<dbReference type="GO" id="GO:0005737">
    <property type="term" value="C:cytoplasm"/>
    <property type="evidence" value="ECO:0007669"/>
    <property type="project" value="UniProtKB-SubCell"/>
</dbReference>
<dbReference type="GO" id="GO:0016226">
    <property type="term" value="P:iron-sulfur cluster assembly"/>
    <property type="evidence" value="ECO:0007669"/>
    <property type="project" value="InterPro"/>
</dbReference>
<dbReference type="GO" id="GO:0006790">
    <property type="term" value="P:sulfur compound metabolic process"/>
    <property type="evidence" value="ECO:0007669"/>
    <property type="project" value="InterPro"/>
</dbReference>
<dbReference type="Gene3D" id="3.90.1010.10">
    <property type="match status" value="1"/>
</dbReference>
<dbReference type="HAMAP" id="MF_01832">
    <property type="entry name" value="SufE"/>
    <property type="match status" value="1"/>
</dbReference>
<dbReference type="InterPro" id="IPR023939">
    <property type="entry name" value="Cysteine_desulfuration_SufE"/>
</dbReference>
<dbReference type="InterPro" id="IPR003808">
    <property type="entry name" value="Fe-S_metab-assoc_dom"/>
</dbReference>
<dbReference type="NCBIfam" id="NF006792">
    <property type="entry name" value="PRK09296.1"/>
    <property type="match status" value="1"/>
</dbReference>
<dbReference type="PANTHER" id="PTHR43597:SF3">
    <property type="entry name" value="CYSTEINE DESULFURATION PROTEIN SUFE"/>
    <property type="match status" value="1"/>
</dbReference>
<dbReference type="PANTHER" id="PTHR43597">
    <property type="entry name" value="SULFUR ACCEPTOR PROTEIN CSDE"/>
    <property type="match status" value="1"/>
</dbReference>
<dbReference type="Pfam" id="PF02657">
    <property type="entry name" value="SufE"/>
    <property type="match status" value="1"/>
</dbReference>
<dbReference type="SUPFAM" id="SSF82649">
    <property type="entry name" value="SufE/NifU"/>
    <property type="match status" value="1"/>
</dbReference>
<evidence type="ECO:0000255" key="1">
    <source>
        <dbReference type="HAMAP-Rule" id="MF_01832"/>
    </source>
</evidence>
<accession>B5F7C3</accession>
<feature type="chain" id="PRO_1000188330" description="Cysteine desulfuration protein SufE">
    <location>
        <begin position="1"/>
        <end position="138"/>
    </location>
</feature>
<feature type="active site" description="Cysteine persulfide intermediate" evidence="1">
    <location>
        <position position="51"/>
    </location>
</feature>
<name>SUFE_SALA4</name>
<gene>
    <name evidence="1" type="primary">sufE</name>
    <name type="ordered locus">SeAg_B1797</name>
</gene>
<sequence length="138" mass="15790">MAALPDKEKLLRNFTRCANWEEKYLYIIELGQRLAELNPQDRNPQNTIHGCQSQVWIVMRRNANGIIELQGDSDAAIVKGLMAVVFILYHQMTAQDIVHFDVRPWFEKMALTQHLTPSRSQGLEAMIRAIRAKAATLS</sequence>
<proteinExistence type="inferred from homology"/>
<protein>
    <recommendedName>
        <fullName evidence="1">Cysteine desulfuration protein SufE</fullName>
    </recommendedName>
</protein>
<reference key="1">
    <citation type="journal article" date="2011" name="J. Bacteriol.">
        <title>Comparative genomics of 28 Salmonella enterica isolates: evidence for CRISPR-mediated adaptive sublineage evolution.</title>
        <authorList>
            <person name="Fricke W.F."/>
            <person name="Mammel M.K."/>
            <person name="McDermott P.F."/>
            <person name="Tartera C."/>
            <person name="White D.G."/>
            <person name="Leclerc J.E."/>
            <person name="Ravel J."/>
            <person name="Cebula T.A."/>
        </authorList>
    </citation>
    <scope>NUCLEOTIDE SEQUENCE [LARGE SCALE GENOMIC DNA]</scope>
    <source>
        <strain>SL483</strain>
    </source>
</reference>
<comment type="function">
    <text evidence="1">Participates in cysteine desulfuration mediated by SufS. Cysteine desulfuration mobilizes sulfur from L-cysteine to yield L-alanine and constitutes an essential step in sulfur metabolism for biosynthesis of a variety of sulfur-containing biomolecules. Functions as a sulfur acceptor for SufS, by mediating the direct transfer of the sulfur atom from the S-sulfanylcysteine of SufS, an intermediate product of cysteine desulfuration process.</text>
</comment>
<comment type="pathway">
    <text evidence="1">Cofactor biosynthesis; iron-sulfur cluster biosynthesis.</text>
</comment>
<comment type="subunit">
    <text evidence="1">Homodimer. Interacts with SufS.</text>
</comment>
<comment type="subcellular location">
    <subcellularLocation>
        <location evidence="1">Cytoplasm</location>
    </subcellularLocation>
</comment>
<comment type="similarity">
    <text evidence="1">Belongs to the SufE family.</text>
</comment>
<keyword id="KW-0963">Cytoplasm</keyword>
<organism>
    <name type="scientific">Salmonella agona (strain SL483)</name>
    <dbReference type="NCBI Taxonomy" id="454166"/>
    <lineage>
        <taxon>Bacteria</taxon>
        <taxon>Pseudomonadati</taxon>
        <taxon>Pseudomonadota</taxon>
        <taxon>Gammaproteobacteria</taxon>
        <taxon>Enterobacterales</taxon>
        <taxon>Enterobacteriaceae</taxon>
        <taxon>Salmonella</taxon>
    </lineage>
</organism>